<geneLocation type="chloroplast"/>
<name>CYF_SACOF</name>
<protein>
    <recommendedName>
        <fullName evidence="2">Cytochrome f</fullName>
    </recommendedName>
</protein>
<sequence>MENRKTFSWLKEQMIRSISVSIMIYVITRTSISNAYPIFAQQGYENPREATGRIVCANCHLANKPVDIEVPQAVLPDTVFEAVLRIPYDMQLKQVLANGKKGGLNVGAVLILPEGFELAPPDRISPELKEKIGNLSFQSYRPNKKNILVIGPVPGKKYSEIVFPILSPDPATKKDVHFLKYPIYVGGNRGRGQIYPDGTKSNNTVYNATSTGIVKKILRKEKGGYEISIVDASDGRQVIDIIPPGPELLVSEGESIKLDQPLTSNPNVGGFGQGDAEIVLQDPLRVQGLLFFFASVILAQVFLVLKKKQFEKVQLYEMNF</sequence>
<accession>Q6ENV1</accession>
<organism>
    <name type="scientific">Saccharum officinarum</name>
    <name type="common">Sugarcane</name>
    <dbReference type="NCBI Taxonomy" id="4547"/>
    <lineage>
        <taxon>Eukaryota</taxon>
        <taxon>Viridiplantae</taxon>
        <taxon>Streptophyta</taxon>
        <taxon>Embryophyta</taxon>
        <taxon>Tracheophyta</taxon>
        <taxon>Spermatophyta</taxon>
        <taxon>Magnoliopsida</taxon>
        <taxon>Liliopsida</taxon>
        <taxon>Poales</taxon>
        <taxon>Poaceae</taxon>
        <taxon>PACMAD clade</taxon>
        <taxon>Panicoideae</taxon>
        <taxon>Andropogonodae</taxon>
        <taxon>Andropogoneae</taxon>
        <taxon>Saccharinae</taxon>
        <taxon>Saccharum</taxon>
        <taxon>Saccharum officinarum species complex</taxon>
    </lineage>
</organism>
<comment type="function">
    <text evidence="2">Component of the cytochrome b6-f complex, which mediates electron transfer between photosystem II (PSII) and photosystem I (PSI), cyclic electron flow around PSI, and state transitions.</text>
</comment>
<comment type="cofactor">
    <cofactor evidence="2">
        <name>heme</name>
        <dbReference type="ChEBI" id="CHEBI:30413"/>
    </cofactor>
    <text evidence="2">Binds 1 heme group covalently.</text>
</comment>
<comment type="subunit">
    <text evidence="1">The 4 large subunits of the cytochrome b6-f complex are cytochrome b6, subunit IV (17 kDa polypeptide, petD), cytochrome f and the Rieske protein, while the 4 small subunits are PetG, PetL, PetM and PetN. The complex functions as a dimer (By similarity).</text>
</comment>
<comment type="subcellular location">
    <subcellularLocation>
        <location evidence="2">Plastid</location>
        <location evidence="2">Chloroplast thylakoid membrane</location>
        <topology evidence="2">Single-pass membrane protein</topology>
    </subcellularLocation>
</comment>
<comment type="similarity">
    <text evidence="2">Belongs to the cytochrome f family.</text>
</comment>
<feature type="signal peptide" evidence="2">
    <location>
        <begin position="1"/>
        <end position="35"/>
    </location>
</feature>
<feature type="chain" id="PRO_0000023835" description="Cytochrome f">
    <location>
        <begin position="36"/>
        <end position="320"/>
    </location>
</feature>
<feature type="transmembrane region" description="Helical" evidence="2">
    <location>
        <begin position="286"/>
        <end position="306"/>
    </location>
</feature>
<feature type="binding site" description="axial binding residue" evidence="2">
    <location>
        <position position="36"/>
    </location>
    <ligand>
        <name>heme</name>
        <dbReference type="ChEBI" id="CHEBI:30413"/>
    </ligand>
    <ligandPart>
        <name>Fe</name>
        <dbReference type="ChEBI" id="CHEBI:18248"/>
    </ligandPart>
</feature>
<feature type="binding site" description="covalent" evidence="2">
    <location>
        <position position="56"/>
    </location>
    <ligand>
        <name>heme</name>
        <dbReference type="ChEBI" id="CHEBI:30413"/>
    </ligand>
</feature>
<feature type="binding site" description="covalent" evidence="2">
    <location>
        <position position="59"/>
    </location>
    <ligand>
        <name>heme</name>
        <dbReference type="ChEBI" id="CHEBI:30413"/>
    </ligand>
</feature>
<feature type="binding site" description="axial binding residue" evidence="2">
    <location>
        <position position="60"/>
    </location>
    <ligand>
        <name>heme</name>
        <dbReference type="ChEBI" id="CHEBI:30413"/>
    </ligand>
    <ligandPart>
        <name>Fe</name>
        <dbReference type="ChEBI" id="CHEBI:18248"/>
    </ligandPart>
</feature>
<proteinExistence type="inferred from homology"/>
<evidence type="ECO:0000250" key="1"/>
<evidence type="ECO:0000255" key="2">
    <source>
        <dbReference type="HAMAP-Rule" id="MF_00610"/>
    </source>
</evidence>
<dbReference type="EMBL" id="AP006714">
    <property type="protein sequence ID" value="BAD27305.1"/>
    <property type="molecule type" value="Genomic_DNA"/>
</dbReference>
<dbReference type="RefSeq" id="YP_009389583.1">
    <property type="nucleotide sequence ID" value="NC_035224.1"/>
</dbReference>
<dbReference type="SMR" id="Q6ENV1"/>
<dbReference type="GeneID" id="33347769"/>
<dbReference type="GO" id="GO:0009535">
    <property type="term" value="C:chloroplast thylakoid membrane"/>
    <property type="evidence" value="ECO:0007669"/>
    <property type="project" value="UniProtKB-SubCell"/>
</dbReference>
<dbReference type="GO" id="GO:0009055">
    <property type="term" value="F:electron transfer activity"/>
    <property type="evidence" value="ECO:0007669"/>
    <property type="project" value="UniProtKB-UniRule"/>
</dbReference>
<dbReference type="GO" id="GO:0020037">
    <property type="term" value="F:heme binding"/>
    <property type="evidence" value="ECO:0007669"/>
    <property type="project" value="InterPro"/>
</dbReference>
<dbReference type="GO" id="GO:0005506">
    <property type="term" value="F:iron ion binding"/>
    <property type="evidence" value="ECO:0007669"/>
    <property type="project" value="InterPro"/>
</dbReference>
<dbReference type="GO" id="GO:0015979">
    <property type="term" value="P:photosynthesis"/>
    <property type="evidence" value="ECO:0007669"/>
    <property type="project" value="UniProtKB-UniRule"/>
</dbReference>
<dbReference type="FunFam" id="1.20.5.700:FF:000001">
    <property type="entry name" value="Cytochrome f"/>
    <property type="match status" value="1"/>
</dbReference>
<dbReference type="FunFam" id="2.40.50.100:FF:000007">
    <property type="entry name" value="Cytochrome f"/>
    <property type="match status" value="1"/>
</dbReference>
<dbReference type="FunFam" id="2.60.40.830:FF:000001">
    <property type="entry name" value="Cytochrome f"/>
    <property type="match status" value="1"/>
</dbReference>
<dbReference type="Gene3D" id="2.40.50.100">
    <property type="match status" value="1"/>
</dbReference>
<dbReference type="Gene3D" id="2.60.40.830">
    <property type="entry name" value="Cytochrome f large domain"/>
    <property type="match status" value="1"/>
</dbReference>
<dbReference type="Gene3D" id="1.20.5.700">
    <property type="entry name" value="Single helix bin"/>
    <property type="match status" value="1"/>
</dbReference>
<dbReference type="HAMAP" id="MF_00610">
    <property type="entry name" value="Cytb6_f_cytF"/>
    <property type="match status" value="1"/>
</dbReference>
<dbReference type="InterPro" id="IPR024058">
    <property type="entry name" value="Cyt-f_TM"/>
</dbReference>
<dbReference type="InterPro" id="IPR002325">
    <property type="entry name" value="Cyt_f"/>
</dbReference>
<dbReference type="InterPro" id="IPR024094">
    <property type="entry name" value="Cyt_f_lg_dom"/>
</dbReference>
<dbReference type="InterPro" id="IPR036826">
    <property type="entry name" value="Cyt_f_lg_dom_sf"/>
</dbReference>
<dbReference type="InterPro" id="IPR011054">
    <property type="entry name" value="Rudment_hybrid_motif"/>
</dbReference>
<dbReference type="PANTHER" id="PTHR33288">
    <property type="match status" value="1"/>
</dbReference>
<dbReference type="PANTHER" id="PTHR33288:SF10">
    <property type="entry name" value="CYTOCHROME F"/>
    <property type="match status" value="1"/>
</dbReference>
<dbReference type="Pfam" id="PF01333">
    <property type="entry name" value="Apocytochr_F_C"/>
    <property type="match status" value="1"/>
</dbReference>
<dbReference type="Pfam" id="PF16639">
    <property type="entry name" value="Apocytochr_F_N"/>
    <property type="match status" value="1"/>
</dbReference>
<dbReference type="PRINTS" id="PR00610">
    <property type="entry name" value="CYTOCHROMEF"/>
</dbReference>
<dbReference type="SUPFAM" id="SSF103431">
    <property type="entry name" value="Cytochrome f subunit of the cytochrome b6f complex, transmembrane anchor"/>
    <property type="match status" value="1"/>
</dbReference>
<dbReference type="SUPFAM" id="SSF49441">
    <property type="entry name" value="Cytochrome f, large domain"/>
    <property type="match status" value="1"/>
</dbReference>
<dbReference type="SUPFAM" id="SSF51246">
    <property type="entry name" value="Rudiment single hybrid motif"/>
    <property type="match status" value="1"/>
</dbReference>
<dbReference type="PROSITE" id="PS51010">
    <property type="entry name" value="CYTF"/>
    <property type="match status" value="1"/>
</dbReference>
<gene>
    <name evidence="2" type="primary">petA</name>
</gene>
<keyword id="KW-0150">Chloroplast</keyword>
<keyword id="KW-0249">Electron transport</keyword>
<keyword id="KW-0349">Heme</keyword>
<keyword id="KW-0408">Iron</keyword>
<keyword id="KW-0472">Membrane</keyword>
<keyword id="KW-0479">Metal-binding</keyword>
<keyword id="KW-0602">Photosynthesis</keyword>
<keyword id="KW-0934">Plastid</keyword>
<keyword id="KW-0732">Signal</keyword>
<keyword id="KW-0793">Thylakoid</keyword>
<keyword id="KW-0812">Transmembrane</keyword>
<keyword id="KW-1133">Transmembrane helix</keyword>
<keyword id="KW-0813">Transport</keyword>
<reference key="1">
    <citation type="journal article" date="2004" name="DNA Res.">
        <title>Complete nucleotide sequence of the sugarcane (Saccharum officinarum) chloroplast genome: a comparative analysis of four monocot chloroplast genomes.</title>
        <authorList>
            <person name="Asano T."/>
            <person name="Tsudzuki T."/>
            <person name="Takahashi S."/>
            <person name="Shimada H."/>
            <person name="Kadowaki K."/>
        </authorList>
    </citation>
    <scope>NUCLEOTIDE SEQUENCE [LARGE SCALE GENOMIC DNA]</scope>
</reference>